<comment type="function">
    <text evidence="2">Cell wall formation.</text>
</comment>
<comment type="catalytic activity">
    <reaction evidence="2">
        <text>2 D-alanine + ATP = D-alanyl-D-alanine + ADP + phosphate + H(+)</text>
        <dbReference type="Rhea" id="RHEA:11224"/>
        <dbReference type="ChEBI" id="CHEBI:15378"/>
        <dbReference type="ChEBI" id="CHEBI:30616"/>
        <dbReference type="ChEBI" id="CHEBI:43474"/>
        <dbReference type="ChEBI" id="CHEBI:57416"/>
        <dbReference type="ChEBI" id="CHEBI:57822"/>
        <dbReference type="ChEBI" id="CHEBI:456216"/>
        <dbReference type="EC" id="6.3.2.4"/>
    </reaction>
</comment>
<comment type="cofactor">
    <cofactor evidence="1">
        <name>Mg(2+)</name>
        <dbReference type="ChEBI" id="CHEBI:18420"/>
    </cofactor>
    <cofactor evidence="1">
        <name>Mn(2+)</name>
        <dbReference type="ChEBI" id="CHEBI:29035"/>
    </cofactor>
    <text evidence="1">Binds 2 magnesium or manganese ions per subunit.</text>
</comment>
<comment type="pathway">
    <text evidence="2">Cell wall biogenesis; peptidoglycan biosynthesis.</text>
</comment>
<comment type="subcellular location">
    <subcellularLocation>
        <location evidence="2">Cytoplasm</location>
    </subcellularLocation>
</comment>
<comment type="similarity">
    <text evidence="2">Belongs to the D-alanine--D-alanine ligase family.</text>
</comment>
<gene>
    <name evidence="2" type="primary">ddl</name>
    <name type="ordered locus">BamMC406_0490</name>
</gene>
<evidence type="ECO:0000250" key="1"/>
<evidence type="ECO:0000255" key="2">
    <source>
        <dbReference type="HAMAP-Rule" id="MF_00047"/>
    </source>
</evidence>
<evidence type="ECO:0007829" key="3">
    <source>
        <dbReference type="PDB" id="4EG0"/>
    </source>
</evidence>
<reference key="1">
    <citation type="submission" date="2008-04" db="EMBL/GenBank/DDBJ databases">
        <title>Complete sequence of chromosome 1 of Burkholderia ambifaria MC40-6.</title>
        <authorList>
            <person name="Copeland A."/>
            <person name="Lucas S."/>
            <person name="Lapidus A."/>
            <person name="Glavina del Rio T."/>
            <person name="Dalin E."/>
            <person name="Tice H."/>
            <person name="Pitluck S."/>
            <person name="Chain P."/>
            <person name="Malfatti S."/>
            <person name="Shin M."/>
            <person name="Vergez L."/>
            <person name="Lang D."/>
            <person name="Schmutz J."/>
            <person name="Larimer F."/>
            <person name="Land M."/>
            <person name="Hauser L."/>
            <person name="Kyrpides N."/>
            <person name="Lykidis A."/>
            <person name="Ramette A."/>
            <person name="Konstantinidis K."/>
            <person name="Tiedje J."/>
            <person name="Richardson P."/>
        </authorList>
    </citation>
    <scope>NUCLEOTIDE SEQUENCE [LARGE SCALE GENOMIC DNA]</scope>
    <source>
        <strain>MC40-6</strain>
    </source>
</reference>
<proteinExistence type="evidence at protein level"/>
<name>DDL_BURA4</name>
<sequence length="313" mass="33393">MSGIDPKRFGKVAVLFGGESAEREVSLTSGRLVLQGLRDAGIDAHPFDPAERPLSALKDEGFVRAFNALHGGYGENGQIQGALDFYGIRYTGSGVLGSALGLDKFRTKLVWQQTGVPTPPFETVMRGDDYAARATDIVAKLGLPLFVKPASEGSSVAVLKVKTADALPAALSEAATHDKIVIVEKSIEGGGEYTACIAGDLDLPLIKIVPAGEFYDYHAKYVANDTQYLIPCGLPAEQETELKRIARRAFDVLGCTDWGRADFMLDAAGNAYFLEVNTAPGMTDHSLPPKAARSIGIGYSELVVKVLSLTLND</sequence>
<keyword id="KW-0002">3D-structure</keyword>
<keyword id="KW-0067">ATP-binding</keyword>
<keyword id="KW-0133">Cell shape</keyword>
<keyword id="KW-0961">Cell wall biogenesis/degradation</keyword>
<keyword id="KW-0963">Cytoplasm</keyword>
<keyword id="KW-0436">Ligase</keyword>
<keyword id="KW-0460">Magnesium</keyword>
<keyword id="KW-0464">Manganese</keyword>
<keyword id="KW-0479">Metal-binding</keyword>
<keyword id="KW-0547">Nucleotide-binding</keyword>
<keyword id="KW-0573">Peptidoglycan synthesis</keyword>
<organism>
    <name type="scientific">Burkholderia ambifaria (strain MC40-6)</name>
    <dbReference type="NCBI Taxonomy" id="398577"/>
    <lineage>
        <taxon>Bacteria</taxon>
        <taxon>Pseudomonadati</taxon>
        <taxon>Pseudomonadota</taxon>
        <taxon>Betaproteobacteria</taxon>
        <taxon>Burkholderiales</taxon>
        <taxon>Burkholderiaceae</taxon>
        <taxon>Burkholderia</taxon>
        <taxon>Burkholderia cepacia complex</taxon>
    </lineage>
</organism>
<accession>B1YSS6</accession>
<protein>
    <recommendedName>
        <fullName evidence="2">D-alanine--D-alanine ligase</fullName>
        <ecNumber evidence="2">6.3.2.4</ecNumber>
    </recommendedName>
    <alternativeName>
        <fullName evidence="2">D-Ala-D-Ala ligase</fullName>
    </alternativeName>
    <alternativeName>
        <fullName evidence="2">D-alanylalanine synthetase</fullName>
    </alternativeName>
</protein>
<feature type="chain" id="PRO_1000091164" description="D-alanine--D-alanine ligase">
    <location>
        <begin position="1"/>
        <end position="313"/>
    </location>
</feature>
<feature type="domain" description="ATP-grasp" evidence="2">
    <location>
        <begin position="108"/>
        <end position="308"/>
    </location>
</feature>
<feature type="binding site" evidence="2">
    <location>
        <begin position="138"/>
        <end position="193"/>
    </location>
    <ligand>
        <name>ATP</name>
        <dbReference type="ChEBI" id="CHEBI:30616"/>
    </ligand>
</feature>
<feature type="binding site" evidence="2">
    <location>
        <position position="262"/>
    </location>
    <ligand>
        <name>Mg(2+)</name>
        <dbReference type="ChEBI" id="CHEBI:18420"/>
        <label>1</label>
    </ligand>
</feature>
<feature type="binding site" evidence="2">
    <location>
        <position position="275"/>
    </location>
    <ligand>
        <name>Mg(2+)</name>
        <dbReference type="ChEBI" id="CHEBI:18420"/>
        <label>1</label>
    </ligand>
</feature>
<feature type="binding site" evidence="2">
    <location>
        <position position="275"/>
    </location>
    <ligand>
        <name>Mg(2+)</name>
        <dbReference type="ChEBI" id="CHEBI:18420"/>
        <label>2</label>
    </ligand>
</feature>
<feature type="binding site" evidence="2">
    <location>
        <position position="277"/>
    </location>
    <ligand>
        <name>Mg(2+)</name>
        <dbReference type="ChEBI" id="CHEBI:18420"/>
        <label>2</label>
    </ligand>
</feature>
<feature type="helix" evidence="3">
    <location>
        <begin position="6"/>
        <end position="9"/>
    </location>
</feature>
<feature type="strand" evidence="3">
    <location>
        <begin position="11"/>
        <end position="15"/>
    </location>
</feature>
<feature type="helix" evidence="3">
    <location>
        <begin position="23"/>
        <end position="39"/>
    </location>
</feature>
<feature type="strand" evidence="3">
    <location>
        <begin position="43"/>
        <end position="47"/>
    </location>
</feature>
<feature type="turn" evidence="3">
    <location>
        <begin position="49"/>
        <end position="51"/>
    </location>
</feature>
<feature type="helix" evidence="3">
    <location>
        <begin position="56"/>
        <end position="59"/>
    </location>
</feature>
<feature type="strand" evidence="3">
    <location>
        <begin position="64"/>
        <end position="67"/>
    </location>
</feature>
<feature type="helix" evidence="3">
    <location>
        <begin position="72"/>
        <end position="74"/>
    </location>
</feature>
<feature type="helix" evidence="3">
    <location>
        <begin position="78"/>
        <end position="86"/>
    </location>
</feature>
<feature type="strand" evidence="3">
    <location>
        <begin position="89"/>
        <end position="92"/>
    </location>
</feature>
<feature type="helix" evidence="3">
    <location>
        <begin position="95"/>
        <end position="102"/>
    </location>
</feature>
<feature type="helix" evidence="3">
    <location>
        <begin position="104"/>
        <end position="113"/>
    </location>
</feature>
<feature type="strand" evidence="3">
    <location>
        <begin position="121"/>
        <end position="125"/>
    </location>
</feature>
<feature type="helix" evidence="3">
    <location>
        <begin position="130"/>
        <end position="141"/>
    </location>
</feature>
<feature type="strand" evidence="3">
    <location>
        <begin position="145"/>
        <end position="149"/>
    </location>
</feature>
<feature type="strand" evidence="3">
    <location>
        <begin position="159"/>
        <end position="161"/>
    </location>
</feature>
<feature type="helix" evidence="3">
    <location>
        <begin position="164"/>
        <end position="166"/>
    </location>
</feature>
<feature type="helix" evidence="3">
    <location>
        <begin position="167"/>
        <end position="174"/>
    </location>
</feature>
<feature type="turn" evidence="3">
    <location>
        <begin position="175"/>
        <end position="177"/>
    </location>
</feature>
<feature type="strand" evidence="3">
    <location>
        <begin position="179"/>
        <end position="185"/>
    </location>
</feature>
<feature type="strand" evidence="3">
    <location>
        <begin position="189"/>
        <end position="198"/>
    </location>
</feature>
<feature type="strand" evidence="3">
    <location>
        <begin position="206"/>
        <end position="209"/>
    </location>
</feature>
<feature type="helix" evidence="3">
    <location>
        <begin position="211"/>
        <end position="213"/>
    </location>
</feature>
<feature type="strand" evidence="3">
    <location>
        <begin position="227"/>
        <end position="231"/>
    </location>
</feature>
<feature type="helix" evidence="3">
    <location>
        <begin position="236"/>
        <end position="251"/>
    </location>
</feature>
<feature type="turn" evidence="3">
    <location>
        <begin position="252"/>
        <end position="254"/>
    </location>
</feature>
<feature type="strand" evidence="3">
    <location>
        <begin position="257"/>
        <end position="265"/>
    </location>
</feature>
<feature type="strand" evidence="3">
    <location>
        <begin position="271"/>
        <end position="279"/>
    </location>
</feature>
<feature type="helix" evidence="3">
    <location>
        <begin position="287"/>
        <end position="294"/>
    </location>
</feature>
<feature type="helix" evidence="3">
    <location>
        <begin position="299"/>
        <end position="308"/>
    </location>
</feature>
<dbReference type="EC" id="6.3.2.4" evidence="2"/>
<dbReference type="EMBL" id="CP001025">
    <property type="protein sequence ID" value="ACB62987.1"/>
    <property type="molecule type" value="Genomic_DNA"/>
</dbReference>
<dbReference type="RefSeq" id="WP_012363028.1">
    <property type="nucleotide sequence ID" value="NC_010551.1"/>
</dbReference>
<dbReference type="PDB" id="4EG0">
    <property type="method" value="X-ray"/>
    <property type="resolution" value="1.65 A"/>
    <property type="chains" value="A/B=1-313"/>
</dbReference>
<dbReference type="PDBsum" id="4EG0"/>
<dbReference type="SMR" id="B1YSS6"/>
<dbReference type="KEGG" id="bac:BamMC406_0490"/>
<dbReference type="HOGENOM" id="CLU_039268_1_2_4"/>
<dbReference type="OrthoDB" id="9813261at2"/>
<dbReference type="UniPathway" id="UPA00219"/>
<dbReference type="EvolutionaryTrace" id="B1YSS6"/>
<dbReference type="Proteomes" id="UP000001680">
    <property type="component" value="Chromosome 1"/>
</dbReference>
<dbReference type="GO" id="GO:0005829">
    <property type="term" value="C:cytosol"/>
    <property type="evidence" value="ECO:0007669"/>
    <property type="project" value="TreeGrafter"/>
</dbReference>
<dbReference type="GO" id="GO:0005524">
    <property type="term" value="F:ATP binding"/>
    <property type="evidence" value="ECO:0007669"/>
    <property type="project" value="UniProtKB-KW"/>
</dbReference>
<dbReference type="GO" id="GO:0008716">
    <property type="term" value="F:D-alanine-D-alanine ligase activity"/>
    <property type="evidence" value="ECO:0007669"/>
    <property type="project" value="UniProtKB-UniRule"/>
</dbReference>
<dbReference type="GO" id="GO:0046872">
    <property type="term" value="F:metal ion binding"/>
    <property type="evidence" value="ECO:0007669"/>
    <property type="project" value="UniProtKB-KW"/>
</dbReference>
<dbReference type="GO" id="GO:0071555">
    <property type="term" value="P:cell wall organization"/>
    <property type="evidence" value="ECO:0007669"/>
    <property type="project" value="UniProtKB-KW"/>
</dbReference>
<dbReference type="GO" id="GO:0009252">
    <property type="term" value="P:peptidoglycan biosynthetic process"/>
    <property type="evidence" value="ECO:0007669"/>
    <property type="project" value="UniProtKB-UniRule"/>
</dbReference>
<dbReference type="GO" id="GO:0008360">
    <property type="term" value="P:regulation of cell shape"/>
    <property type="evidence" value="ECO:0007669"/>
    <property type="project" value="UniProtKB-KW"/>
</dbReference>
<dbReference type="FunFam" id="3.30.1490.20:FF:000007">
    <property type="entry name" value="D-alanine--D-alanine ligase"/>
    <property type="match status" value="1"/>
</dbReference>
<dbReference type="FunFam" id="3.30.470.20:FF:000008">
    <property type="entry name" value="D-alanine--D-alanine ligase"/>
    <property type="match status" value="1"/>
</dbReference>
<dbReference type="FunFam" id="3.40.50.20:FF:000013">
    <property type="entry name" value="D-alanine--D-alanine ligase"/>
    <property type="match status" value="1"/>
</dbReference>
<dbReference type="Gene3D" id="3.40.50.20">
    <property type="match status" value="1"/>
</dbReference>
<dbReference type="Gene3D" id="3.30.1490.20">
    <property type="entry name" value="ATP-grasp fold, A domain"/>
    <property type="match status" value="1"/>
</dbReference>
<dbReference type="Gene3D" id="3.30.470.20">
    <property type="entry name" value="ATP-grasp fold, B domain"/>
    <property type="match status" value="1"/>
</dbReference>
<dbReference type="HAMAP" id="MF_00047">
    <property type="entry name" value="Dala_Dala_lig"/>
    <property type="match status" value="1"/>
</dbReference>
<dbReference type="InterPro" id="IPR011761">
    <property type="entry name" value="ATP-grasp"/>
</dbReference>
<dbReference type="InterPro" id="IPR013815">
    <property type="entry name" value="ATP_grasp_subdomain_1"/>
</dbReference>
<dbReference type="InterPro" id="IPR000291">
    <property type="entry name" value="D-Ala_lig_Van_CS"/>
</dbReference>
<dbReference type="InterPro" id="IPR005905">
    <property type="entry name" value="D_ala_D_ala"/>
</dbReference>
<dbReference type="InterPro" id="IPR011095">
    <property type="entry name" value="Dala_Dala_lig_C"/>
</dbReference>
<dbReference type="InterPro" id="IPR011127">
    <property type="entry name" value="Dala_Dala_lig_N"/>
</dbReference>
<dbReference type="InterPro" id="IPR016185">
    <property type="entry name" value="PreATP-grasp_dom_sf"/>
</dbReference>
<dbReference type="NCBIfam" id="TIGR01205">
    <property type="entry name" value="D_ala_D_alaTIGR"/>
    <property type="match status" value="1"/>
</dbReference>
<dbReference type="NCBIfam" id="NF002378">
    <property type="entry name" value="PRK01372.1"/>
    <property type="match status" value="1"/>
</dbReference>
<dbReference type="PANTHER" id="PTHR23132">
    <property type="entry name" value="D-ALANINE--D-ALANINE LIGASE"/>
    <property type="match status" value="1"/>
</dbReference>
<dbReference type="PANTHER" id="PTHR23132:SF23">
    <property type="entry name" value="D-ALANINE--D-ALANINE LIGASE B"/>
    <property type="match status" value="1"/>
</dbReference>
<dbReference type="Pfam" id="PF07478">
    <property type="entry name" value="Dala_Dala_lig_C"/>
    <property type="match status" value="1"/>
</dbReference>
<dbReference type="Pfam" id="PF01820">
    <property type="entry name" value="Dala_Dala_lig_N"/>
    <property type="match status" value="1"/>
</dbReference>
<dbReference type="PIRSF" id="PIRSF039102">
    <property type="entry name" value="Ddl/VanB"/>
    <property type="match status" value="1"/>
</dbReference>
<dbReference type="SUPFAM" id="SSF56059">
    <property type="entry name" value="Glutathione synthetase ATP-binding domain-like"/>
    <property type="match status" value="1"/>
</dbReference>
<dbReference type="SUPFAM" id="SSF52440">
    <property type="entry name" value="PreATP-grasp domain"/>
    <property type="match status" value="1"/>
</dbReference>
<dbReference type="PROSITE" id="PS50975">
    <property type="entry name" value="ATP_GRASP"/>
    <property type="match status" value="1"/>
</dbReference>
<dbReference type="PROSITE" id="PS00843">
    <property type="entry name" value="DALA_DALA_LIGASE_1"/>
    <property type="match status" value="1"/>
</dbReference>
<dbReference type="PROSITE" id="PS00844">
    <property type="entry name" value="DALA_DALA_LIGASE_2"/>
    <property type="match status" value="1"/>
</dbReference>